<feature type="chain" id="PRO_0000379585" description="PPE family protein PPE11">
    <location>
        <begin position="1"/>
        <end position="518"/>
    </location>
</feature>
<feature type="region of interest" description="Disordered" evidence="1">
    <location>
        <begin position="177"/>
        <end position="197"/>
    </location>
</feature>
<feature type="region of interest" description="Disordered" evidence="1">
    <location>
        <begin position="346"/>
        <end position="375"/>
    </location>
</feature>
<feature type="region of interest" description="Disordered" evidence="1">
    <location>
        <begin position="435"/>
        <end position="458"/>
    </location>
</feature>
<feature type="compositionally biased region" description="Low complexity" evidence="1">
    <location>
        <begin position="181"/>
        <end position="196"/>
    </location>
</feature>
<reference key="1">
    <citation type="journal article" date="1998" name="Nature">
        <title>Deciphering the biology of Mycobacterium tuberculosis from the complete genome sequence.</title>
        <authorList>
            <person name="Cole S.T."/>
            <person name="Brosch R."/>
            <person name="Parkhill J."/>
            <person name="Garnier T."/>
            <person name="Churcher C.M."/>
            <person name="Harris D.E."/>
            <person name="Gordon S.V."/>
            <person name="Eiglmeier K."/>
            <person name="Gas S."/>
            <person name="Barry C.E. III"/>
            <person name="Tekaia F."/>
            <person name="Badcock K."/>
            <person name="Basham D."/>
            <person name="Brown D."/>
            <person name="Chillingworth T."/>
            <person name="Connor R."/>
            <person name="Davies R.M."/>
            <person name="Devlin K."/>
            <person name="Feltwell T."/>
            <person name="Gentles S."/>
            <person name="Hamlin N."/>
            <person name="Holroyd S."/>
            <person name="Hornsby T."/>
            <person name="Jagels K."/>
            <person name="Krogh A."/>
            <person name="McLean J."/>
            <person name="Moule S."/>
            <person name="Murphy L.D."/>
            <person name="Oliver S."/>
            <person name="Osborne J."/>
            <person name="Quail M.A."/>
            <person name="Rajandream M.A."/>
            <person name="Rogers J."/>
            <person name="Rutter S."/>
            <person name="Seeger K."/>
            <person name="Skelton S."/>
            <person name="Squares S."/>
            <person name="Squares R."/>
            <person name="Sulston J.E."/>
            <person name="Taylor K."/>
            <person name="Whitehead S."/>
            <person name="Barrell B.G."/>
        </authorList>
    </citation>
    <scope>NUCLEOTIDE SEQUENCE [LARGE SCALE GENOMIC DNA]</scope>
    <source>
        <strain>ATCC 25618 / H37Rv</strain>
    </source>
</reference>
<reference key="2">
    <citation type="journal article" date="2019" name="Microb. Pathog.">
        <title>PPE11 of Mycobacterium tuberculosis can alter host inflammatory response and trigger cell death.</title>
        <authorList>
            <person name="Peng X."/>
            <person name="Luo T."/>
            <person name="Zhai X."/>
            <person name="Zhang C."/>
            <person name="Suo J."/>
            <person name="Ma P."/>
            <person name="Wang C."/>
            <person name="Bao L."/>
        </authorList>
    </citation>
    <scope>FUNCTION</scope>
    <scope>EXPRESSION IN M.SMEGMATIS</scope>
    <scope>SUBCELLULAR LOCATION</scope>
</reference>
<comment type="function">
    <text evidence="2">May play an important role in the persistence of mycobacteria in host cells. May regulate the innate immune response of macrophages by promoting the production of pro-inflammatory cytokines and inhibiting the production of anti-inflammatory cytokines. Promotes the death of macrophages during infection.</text>
</comment>
<comment type="subcellular location">
    <subcellularLocation>
        <location evidence="2">Secreted</location>
        <location evidence="2">Cell wall</location>
    </subcellularLocation>
    <text evidence="2">Cell wall-associated.</text>
</comment>
<comment type="miscellaneous">
    <text evidence="2">Expression in M.smegmatis enhances the ability to resist in vitro stress and early survival in macrophages. Macrophages infected with recombinant M.smegmatis produce significantly greater amounts of interleukin (IL)-1beta, IL-6, tumor necrosis factor (TNF)-alpha and an early decrease in IL-10 along with higher levels of host cell death.</text>
</comment>
<comment type="similarity">
    <text evidence="4">Belongs to the mycobacterial PPE family.</text>
</comment>
<accession>P9WI39</accession>
<accession>L0T5E9</accession>
<accession>Q6MX41</accession>
<accession>Q7D9S7</accession>
<dbReference type="EMBL" id="AL123456">
    <property type="protein sequence ID" value="CCP43184.1"/>
    <property type="molecule type" value="Genomic_DNA"/>
</dbReference>
<dbReference type="PIR" id="F70831">
    <property type="entry name" value="F70831"/>
</dbReference>
<dbReference type="RefSeq" id="WP_003402284.1">
    <property type="nucleotide sequence ID" value="NZ_NVQJ01000002.1"/>
</dbReference>
<dbReference type="RefSeq" id="YP_177727.1">
    <property type="nucleotide sequence ID" value="NC_000962.3"/>
</dbReference>
<dbReference type="SMR" id="P9WI39"/>
<dbReference type="STRING" id="83332.Rv0453"/>
<dbReference type="PaxDb" id="83332-Rv0453"/>
<dbReference type="DNASU" id="886317"/>
<dbReference type="GeneID" id="886317"/>
<dbReference type="KEGG" id="mtu:Rv0453"/>
<dbReference type="KEGG" id="mtv:RVBD_0453"/>
<dbReference type="TubercuList" id="Rv0453"/>
<dbReference type="eggNOG" id="COG5651">
    <property type="taxonomic scope" value="Bacteria"/>
</dbReference>
<dbReference type="InParanoid" id="P9WI39"/>
<dbReference type="OrthoDB" id="4753487at2"/>
<dbReference type="PhylomeDB" id="P9WI39"/>
<dbReference type="Proteomes" id="UP000001584">
    <property type="component" value="Chromosome"/>
</dbReference>
<dbReference type="GO" id="GO:0005829">
    <property type="term" value="C:cytosol"/>
    <property type="evidence" value="ECO:0007005"/>
    <property type="project" value="MTBBASE"/>
</dbReference>
<dbReference type="GO" id="GO:0005576">
    <property type="term" value="C:extracellular region"/>
    <property type="evidence" value="ECO:0007005"/>
    <property type="project" value="MTBBASE"/>
</dbReference>
<dbReference type="GO" id="GO:0052572">
    <property type="term" value="P:response to host immune response"/>
    <property type="evidence" value="ECO:0000318"/>
    <property type="project" value="GO_Central"/>
</dbReference>
<dbReference type="FunFam" id="1.20.1260.20:FF:000001">
    <property type="entry name" value="PPE family protein PPE41"/>
    <property type="match status" value="1"/>
</dbReference>
<dbReference type="Gene3D" id="1.20.1260.20">
    <property type="entry name" value="PPE superfamily"/>
    <property type="match status" value="1"/>
</dbReference>
<dbReference type="InterPro" id="IPR043641">
    <property type="entry name" value="PPE-PPW_C"/>
</dbReference>
<dbReference type="InterPro" id="IPR000030">
    <property type="entry name" value="PPE_dom"/>
</dbReference>
<dbReference type="InterPro" id="IPR038332">
    <property type="entry name" value="PPE_sf"/>
</dbReference>
<dbReference type="PANTHER" id="PTHR46766">
    <property type="entry name" value="GLUTAMINE-RICH PROTEIN 2"/>
    <property type="match status" value="1"/>
</dbReference>
<dbReference type="PANTHER" id="PTHR46766:SF1">
    <property type="entry name" value="GLUTAMINE-RICH PROTEIN 2"/>
    <property type="match status" value="1"/>
</dbReference>
<dbReference type="Pfam" id="PF00823">
    <property type="entry name" value="PPE"/>
    <property type="match status" value="1"/>
</dbReference>
<dbReference type="Pfam" id="PF18878">
    <property type="entry name" value="PPE-PPW"/>
    <property type="match status" value="1"/>
</dbReference>
<dbReference type="SUPFAM" id="SSF140459">
    <property type="entry name" value="PE/PPE dimer-like"/>
    <property type="match status" value="1"/>
</dbReference>
<organism>
    <name type="scientific">Mycobacterium tuberculosis (strain ATCC 25618 / H37Rv)</name>
    <dbReference type="NCBI Taxonomy" id="83332"/>
    <lineage>
        <taxon>Bacteria</taxon>
        <taxon>Bacillati</taxon>
        <taxon>Actinomycetota</taxon>
        <taxon>Actinomycetes</taxon>
        <taxon>Mycobacteriales</taxon>
        <taxon>Mycobacteriaceae</taxon>
        <taxon>Mycobacterium</taxon>
        <taxon>Mycobacterium tuberculosis complex</taxon>
    </lineage>
</organism>
<keyword id="KW-0134">Cell wall</keyword>
<keyword id="KW-1185">Reference proteome</keyword>
<keyword id="KW-0964">Secreted</keyword>
<keyword id="KW-0843">Virulence</keyword>
<name>PPE11_MYCTU</name>
<evidence type="ECO:0000256" key="1">
    <source>
        <dbReference type="SAM" id="MobiDB-lite"/>
    </source>
</evidence>
<evidence type="ECO:0000269" key="2">
    <source>
    </source>
</evidence>
<evidence type="ECO:0000303" key="3">
    <source>
    </source>
</evidence>
<evidence type="ECO:0000305" key="4"/>
<proteinExistence type="inferred from homology"/>
<protein>
    <recommendedName>
        <fullName evidence="4">PPE family protein PPE11</fullName>
    </recommendedName>
</protein>
<sequence length="518" mass="52837">MTSALIWMASPPEVHSALLSSGPGPGPVLAAATGWSSLGREYAAVAEELGALLAAVQAGVWQGPSAESFAAACLPYLSWLTQASADCAAAAARLEAVTAAYAAALVAMPTLAELAANHATHGAMVATNFFGINTIPIAVNEADYVRMWLQAATTMATYQAVADSAVRSIPDSVPPPRILKSNAQSQHSSSNNSGGADPVDDFIAEILKIITGGRVIWDPEAGTVNGLPYDAYTNPGTLMWWIARSLELLQDFQEFAKLLFTNPVKAFQFLVDLILFDWPTHMLQLATWLAENPQLLVAALTPAISGLGAVSGLAGLTGLVPQPPVVPAPAPDAVVPTVLPLAGTATPTTAPASAPAAGAAPGPPAGTATATSASVPTSAGGFPPYLVGSGPGIDFDAGTPAGSRRAQPAADNVTAVAAAQVSARHQARRRRRAAAKERGNADEFVDMDSGPAIPPSGERDAWASNSGVGGLGFAGTASNETVAAPAGLTTLADDEFQCGPRMPMLPGAWDLGTWDRGD</sequence>
<gene>
    <name evidence="3" type="primary">PPE11</name>
    <name type="ordered locus">Rv0453</name>
</gene>